<evidence type="ECO:0000269" key="1">
    <source>
    </source>
</evidence>
<evidence type="ECO:0000303" key="2">
    <source>
    </source>
</evidence>
<evidence type="ECO:0000305" key="3"/>
<evidence type="ECO:0007829" key="4">
    <source>
        <dbReference type="PDB" id="2N81"/>
    </source>
</evidence>
<comment type="function">
    <text evidence="1 3">Plant non-specific lipid-transfer proteins transfer phospholipids as well as galactolipids across membranes. May play a role in wax or cutin deposition in the cell walls of expanding epidermal cells and certain secretory tissues (Probable). Binds saturated and unsaturated lipids, jasmonic acid and lysolipids (PubMed:27137920). Has antifungal activity against A.niger VKM F-2259 (IC(50)=40 uM), F.oxysporum TCXA-4 (IC(50)=20-40), F.solani VKM F-142 (IC(50)=20-40 uM) and N.crassa VKM F-184 (IC(50)=40 uM) (PubMed:27137920). Has weak antibacterial activity against A.tumefaciens A281, C.michiganensis VKM Ac-1144 and P.syringae VKM B-1546 (PubMed:27137920).</text>
</comment>
<comment type="tissue specificity">
    <text evidence="1">Expressed in roots, stem, leaves and tendrils of the mature plant.</text>
</comment>
<comment type="developmental stage">
    <text evidence="1">Expression drops sharply after germination and increases again in the mature plant.</text>
</comment>
<comment type="mass spectrometry" mass="9401.48" method="MALDI" evidence="1"/>
<comment type="allergen">
    <text evidence="1">Causes an allergenic reaction in human. Binds to IgE.</text>
</comment>
<comment type="similarity">
    <text evidence="3">Belongs to the plant LTP family.</text>
</comment>
<feature type="signal peptide" evidence="1">
    <location>
        <begin position="1"/>
        <end position="25"/>
    </location>
</feature>
<feature type="chain" id="PRO_0000437169" description="Non-specific lipid-transfer protein 1" evidence="1">
    <location>
        <begin position="26"/>
        <end position="119"/>
    </location>
</feature>
<feature type="propeptide" id="PRO_0000437170" evidence="2">
    <location>
        <position position="120"/>
    </location>
</feature>
<feature type="disulfide bond" evidence="1">
    <location>
        <begin position="29"/>
        <end position="78"/>
    </location>
</feature>
<feature type="disulfide bond" evidence="1">
    <location>
        <begin position="39"/>
        <end position="55"/>
    </location>
</feature>
<feature type="disulfide bond" evidence="1">
    <location>
        <begin position="56"/>
        <end position="101"/>
    </location>
</feature>
<feature type="disulfide bond" evidence="1">
    <location>
        <begin position="76"/>
        <end position="115"/>
    </location>
</feature>
<feature type="helix" evidence="4">
    <location>
        <begin position="29"/>
        <end position="35"/>
    </location>
</feature>
<keyword id="KW-0002">3D-structure</keyword>
<keyword id="KW-0020">Allergen</keyword>
<keyword id="KW-0044">Antibiotic</keyword>
<keyword id="KW-0929">Antimicrobial</keyword>
<keyword id="KW-0903">Direct protein sequencing</keyword>
<keyword id="KW-1015">Disulfide bond</keyword>
<keyword id="KW-0295">Fungicide</keyword>
<keyword id="KW-0445">Lipid transport</keyword>
<keyword id="KW-0732">Signal</keyword>
<keyword id="KW-0813">Transport</keyword>
<dbReference type="EMBL" id="KJ569141">
    <property type="protein sequence ID" value="AJG44053.1"/>
    <property type="molecule type" value="mRNA"/>
</dbReference>
<dbReference type="RefSeq" id="NP_001413932.1">
    <property type="nucleotide sequence ID" value="NM_001427003.1"/>
</dbReference>
<dbReference type="PDB" id="2N81">
    <property type="method" value="NMR"/>
    <property type="chains" value="A=26-120"/>
</dbReference>
<dbReference type="PDBsum" id="2N81"/>
<dbReference type="SMR" id="A0A161AT60"/>
<dbReference type="Allergome" id="11950">
    <property type="allergen name" value="Pis s 3"/>
</dbReference>
<dbReference type="Allergome" id="11951">
    <property type="allergen name" value="Pis s 3.0101"/>
</dbReference>
<dbReference type="GeneID" id="127101071"/>
<dbReference type="OrthoDB" id="1890443at2759"/>
<dbReference type="GO" id="GO:0008289">
    <property type="term" value="F:lipid binding"/>
    <property type="evidence" value="ECO:0007669"/>
    <property type="project" value="InterPro"/>
</dbReference>
<dbReference type="GO" id="GO:0042742">
    <property type="term" value="P:defense response to bacterium"/>
    <property type="evidence" value="ECO:0007669"/>
    <property type="project" value="UniProtKB-KW"/>
</dbReference>
<dbReference type="GO" id="GO:0050832">
    <property type="term" value="P:defense response to fungus"/>
    <property type="evidence" value="ECO:0007669"/>
    <property type="project" value="UniProtKB-KW"/>
</dbReference>
<dbReference type="GO" id="GO:0031640">
    <property type="term" value="P:killing of cells of another organism"/>
    <property type="evidence" value="ECO:0007669"/>
    <property type="project" value="UniProtKB-KW"/>
</dbReference>
<dbReference type="GO" id="GO:0006869">
    <property type="term" value="P:lipid transport"/>
    <property type="evidence" value="ECO:0007669"/>
    <property type="project" value="UniProtKB-KW"/>
</dbReference>
<dbReference type="CDD" id="cd01960">
    <property type="entry name" value="nsLTP1"/>
    <property type="match status" value="1"/>
</dbReference>
<dbReference type="FunFam" id="1.10.110.10:FF:000002">
    <property type="entry name" value="Non-specific lipid-transfer protein"/>
    <property type="match status" value="1"/>
</dbReference>
<dbReference type="Gene3D" id="1.10.110.10">
    <property type="entry name" value="Plant lipid-transfer and hydrophobic proteins"/>
    <property type="match status" value="1"/>
</dbReference>
<dbReference type="InterPro" id="IPR036312">
    <property type="entry name" value="Bifun_inhib/LTP/seed_sf"/>
</dbReference>
<dbReference type="InterPro" id="IPR016140">
    <property type="entry name" value="Bifunc_inhib/LTP/seed_store"/>
</dbReference>
<dbReference type="InterPro" id="IPR000528">
    <property type="entry name" value="Plant_nsLTP"/>
</dbReference>
<dbReference type="PANTHER" id="PTHR33076">
    <property type="entry name" value="NON-SPECIFIC LIPID-TRANSFER PROTEIN 2-RELATED"/>
    <property type="match status" value="1"/>
</dbReference>
<dbReference type="Pfam" id="PF00234">
    <property type="entry name" value="Tryp_alpha_amyl"/>
    <property type="match status" value="1"/>
</dbReference>
<dbReference type="PRINTS" id="PR00382">
    <property type="entry name" value="LIPIDTRNSFER"/>
</dbReference>
<dbReference type="SMART" id="SM00499">
    <property type="entry name" value="AAI"/>
    <property type="match status" value="1"/>
</dbReference>
<dbReference type="SUPFAM" id="SSF47699">
    <property type="entry name" value="Bifunctional inhibitor/lipid-transfer protein/seed storage 2S albumin"/>
    <property type="match status" value="1"/>
</dbReference>
<dbReference type="PROSITE" id="PS00597">
    <property type="entry name" value="PLANT_LTP"/>
    <property type="match status" value="1"/>
</dbReference>
<proteinExistence type="evidence at protein level"/>
<sequence length="120" mass="12160">MARSMKLACVALVICMVVIAPMAEAALSCGTVSADMAPCVTYLQAPNNASPPPPCCAGVKKLLAAATTTPDRQAACNCLKSAAGSIPKLNTNNAAALPGKCGVSIPYKISTSTNCNTVRF</sequence>
<protein>
    <recommendedName>
        <fullName evidence="2">Non-specific lipid-transfer protein 1</fullName>
        <shortName evidence="2">PsLTP1</shortName>
    </recommendedName>
    <allergenName evidence="3">Pis s 3</allergenName>
</protein>
<accession>A0A161AT60</accession>
<accession>C0HJR7</accession>
<organism>
    <name type="scientific">Pisum sativum</name>
    <name type="common">Garden pea</name>
    <name type="synonym">Lathyrus oleraceus</name>
    <dbReference type="NCBI Taxonomy" id="3888"/>
    <lineage>
        <taxon>Eukaryota</taxon>
        <taxon>Viridiplantae</taxon>
        <taxon>Streptophyta</taxon>
        <taxon>Embryophyta</taxon>
        <taxon>Tracheophyta</taxon>
        <taxon>Spermatophyta</taxon>
        <taxon>Magnoliopsida</taxon>
        <taxon>eudicotyledons</taxon>
        <taxon>Gunneridae</taxon>
        <taxon>Pentapetalae</taxon>
        <taxon>rosids</taxon>
        <taxon>fabids</taxon>
        <taxon>Fabales</taxon>
        <taxon>Fabaceae</taxon>
        <taxon>Papilionoideae</taxon>
        <taxon>50 kb inversion clade</taxon>
        <taxon>NPAAA clade</taxon>
        <taxon>Hologalegina</taxon>
        <taxon>IRL clade</taxon>
        <taxon>Fabeae</taxon>
        <taxon>Pisum</taxon>
    </lineage>
</organism>
<name>NLTP1_PEA</name>
<reference evidence="3" key="1">
    <citation type="journal article" date="2016" name="BMC Plant Biol.">
        <title>A novel lipid transfer protein from the pea Pisum sativum: isolation, recombinant expression, solution structure, antifungal activity, lipid binding, and allergenic properties.</title>
        <authorList>
            <person name="Bogdanov I.V."/>
            <person name="Shenkarev Z.O."/>
            <person name="Finkina E.I."/>
            <person name="Melnikova D.N."/>
            <person name="Rumynskiy E.I."/>
            <person name="Arseniev A.S."/>
            <person name="Ovchinnikova T.V."/>
        </authorList>
    </citation>
    <scope>NUCLEOTIDE SEQUENCE [MRNA]</scope>
    <scope>PROTEIN SEQUENCE OF 26-119</scope>
    <scope>FUNCTION</scope>
    <scope>TISSUE SPECIFICITY</scope>
    <scope>DEVELOPMENTAL STAGE</scope>
    <scope>DISULFIDE BONDS</scope>
    <scope>MASS SPECTROMETRY</scope>
    <scope>ALLERGEN</scope>
    <scope>STRUCTURE BY NMR OF 26-120</scope>
    <source>
        <tissue evidence="1">Seed</tissue>
    </source>
</reference>